<proteinExistence type="inferred from homology"/>
<sequence>MSTLELHHIGKSYQSVMVLDRIDLHVPPGSRTAIVGPSGSGKTTLLRIIAGFETPDAGKVILQGKAMFDGTTYVPAHKRGIGFVPQDGALFPHFTVAGNIGYGLKGSQRDKERRINELMDMVALDRRLSALWPHEISGGQQQRVALARALAQRPVLMLLDEPFSALDTALRASTRKAVAELLSEANIASILVTHDQTEALSFADQVAVMRAGKLAHVGPPQELYLRPVDEPTATFLGETLMLTAQLGTGLAHCALGQVKVDNPHRRGEARIMLRPEQITLTPLRPEQYNAASCLAKVVAIDFAGFISTLTLQIISSGETIEIKTISREDLHVGLTVGLDIMGQAHIFAE</sequence>
<gene>
    <name evidence="1" type="primary">fbpC</name>
    <name type="ordered locus">YPTB2684</name>
</gene>
<comment type="function">
    <text evidence="1">Part of the ABC transporter complex FbpABC involved in Fe(3+) ions import. Responsible for energy coupling to the transport system.</text>
</comment>
<comment type="catalytic activity">
    <reaction evidence="1">
        <text>Fe(3+)(out) + ATP + H2O = Fe(3+)(in) + ADP + phosphate + H(+)</text>
        <dbReference type="Rhea" id="RHEA:12332"/>
        <dbReference type="ChEBI" id="CHEBI:15377"/>
        <dbReference type="ChEBI" id="CHEBI:15378"/>
        <dbReference type="ChEBI" id="CHEBI:29034"/>
        <dbReference type="ChEBI" id="CHEBI:30616"/>
        <dbReference type="ChEBI" id="CHEBI:43474"/>
        <dbReference type="ChEBI" id="CHEBI:456216"/>
        <dbReference type="EC" id="7.2.2.7"/>
    </reaction>
</comment>
<comment type="subunit">
    <text evidence="1">The complex is composed of two ATP-binding proteins (FbpC), two transmembrane proteins (FbpB) and a solute-binding protein (FbpA).</text>
</comment>
<comment type="subcellular location">
    <subcellularLocation>
        <location evidence="1">Cell inner membrane</location>
        <topology evidence="1">Peripheral membrane protein</topology>
    </subcellularLocation>
</comment>
<comment type="similarity">
    <text evidence="1">Belongs to the ABC transporter superfamily. Fe(3+) ion importer (TC 3.A.1.10) family.</text>
</comment>
<feature type="chain" id="PRO_0000092370" description="Fe(3+) ions import ATP-binding protein FbpC">
    <location>
        <begin position="1"/>
        <end position="349"/>
    </location>
</feature>
<feature type="domain" description="ABC transporter" evidence="1">
    <location>
        <begin position="4"/>
        <end position="236"/>
    </location>
</feature>
<feature type="binding site" evidence="1">
    <location>
        <begin position="36"/>
        <end position="43"/>
    </location>
    <ligand>
        <name>ATP</name>
        <dbReference type="ChEBI" id="CHEBI:30616"/>
    </ligand>
</feature>
<evidence type="ECO:0000255" key="1">
    <source>
        <dbReference type="HAMAP-Rule" id="MF_01706"/>
    </source>
</evidence>
<name>FBPC_YERPS</name>
<accession>Q668Q3</accession>
<protein>
    <recommendedName>
        <fullName evidence="1">Fe(3+) ions import ATP-binding protein FbpC</fullName>
        <ecNumber evidence="1">7.2.2.7</ecNumber>
    </recommendedName>
</protein>
<organism>
    <name type="scientific">Yersinia pseudotuberculosis serotype I (strain IP32953)</name>
    <dbReference type="NCBI Taxonomy" id="273123"/>
    <lineage>
        <taxon>Bacteria</taxon>
        <taxon>Pseudomonadati</taxon>
        <taxon>Pseudomonadota</taxon>
        <taxon>Gammaproteobacteria</taxon>
        <taxon>Enterobacterales</taxon>
        <taxon>Yersiniaceae</taxon>
        <taxon>Yersinia</taxon>
    </lineage>
</organism>
<keyword id="KW-0067">ATP-binding</keyword>
<keyword id="KW-0997">Cell inner membrane</keyword>
<keyword id="KW-1003">Cell membrane</keyword>
<keyword id="KW-0406">Ion transport</keyword>
<keyword id="KW-0408">Iron</keyword>
<keyword id="KW-0410">Iron transport</keyword>
<keyword id="KW-0472">Membrane</keyword>
<keyword id="KW-0547">Nucleotide-binding</keyword>
<keyword id="KW-1278">Translocase</keyword>
<keyword id="KW-0813">Transport</keyword>
<reference key="1">
    <citation type="journal article" date="2004" name="Proc. Natl. Acad. Sci. U.S.A.">
        <title>Insights into the evolution of Yersinia pestis through whole-genome comparison with Yersinia pseudotuberculosis.</title>
        <authorList>
            <person name="Chain P.S.G."/>
            <person name="Carniel E."/>
            <person name="Larimer F.W."/>
            <person name="Lamerdin J."/>
            <person name="Stoutland P.O."/>
            <person name="Regala W.M."/>
            <person name="Georgescu A.M."/>
            <person name="Vergez L.M."/>
            <person name="Land M.L."/>
            <person name="Motin V.L."/>
            <person name="Brubaker R.R."/>
            <person name="Fowler J."/>
            <person name="Hinnebusch J."/>
            <person name="Marceau M."/>
            <person name="Medigue C."/>
            <person name="Simonet M."/>
            <person name="Chenal-Francisque V."/>
            <person name="Souza B."/>
            <person name="Dacheux D."/>
            <person name="Elliott J.M."/>
            <person name="Derbise A."/>
            <person name="Hauser L.J."/>
            <person name="Garcia E."/>
        </authorList>
    </citation>
    <scope>NUCLEOTIDE SEQUENCE [LARGE SCALE GENOMIC DNA]</scope>
    <source>
        <strain>IP32953</strain>
    </source>
</reference>
<dbReference type="EC" id="7.2.2.7" evidence="1"/>
<dbReference type="EMBL" id="BX936398">
    <property type="protein sequence ID" value="CAH21922.1"/>
    <property type="molecule type" value="Genomic_DNA"/>
</dbReference>
<dbReference type="RefSeq" id="WP_011192722.1">
    <property type="nucleotide sequence ID" value="NC_006155.1"/>
</dbReference>
<dbReference type="SMR" id="Q668Q3"/>
<dbReference type="KEGG" id="ypo:BZ17_3954"/>
<dbReference type="KEGG" id="yps:YPTB2684"/>
<dbReference type="PATRIC" id="fig|273123.14.peg.4148"/>
<dbReference type="Proteomes" id="UP000001011">
    <property type="component" value="Chromosome"/>
</dbReference>
<dbReference type="GO" id="GO:0005886">
    <property type="term" value="C:plasma membrane"/>
    <property type="evidence" value="ECO:0007669"/>
    <property type="project" value="UniProtKB-SubCell"/>
</dbReference>
<dbReference type="GO" id="GO:0015408">
    <property type="term" value="F:ABC-type ferric iron transporter activity"/>
    <property type="evidence" value="ECO:0007669"/>
    <property type="project" value="UniProtKB-EC"/>
</dbReference>
<dbReference type="GO" id="GO:0005524">
    <property type="term" value="F:ATP binding"/>
    <property type="evidence" value="ECO:0007669"/>
    <property type="project" value="UniProtKB-KW"/>
</dbReference>
<dbReference type="GO" id="GO:0016887">
    <property type="term" value="F:ATP hydrolysis activity"/>
    <property type="evidence" value="ECO:0007669"/>
    <property type="project" value="InterPro"/>
</dbReference>
<dbReference type="CDD" id="cd03259">
    <property type="entry name" value="ABC_Carb_Solutes_like"/>
    <property type="match status" value="1"/>
</dbReference>
<dbReference type="FunFam" id="3.40.50.300:FF:000425">
    <property type="entry name" value="Probable ABC transporter, ATP-binding subunit"/>
    <property type="match status" value="1"/>
</dbReference>
<dbReference type="Gene3D" id="2.40.50.450">
    <property type="match status" value="1"/>
</dbReference>
<dbReference type="Gene3D" id="3.40.50.300">
    <property type="entry name" value="P-loop containing nucleotide triphosphate hydrolases"/>
    <property type="match status" value="1"/>
</dbReference>
<dbReference type="InterPro" id="IPR003593">
    <property type="entry name" value="AAA+_ATPase"/>
</dbReference>
<dbReference type="InterPro" id="IPR050093">
    <property type="entry name" value="ABC_SmlMolc_Importer"/>
</dbReference>
<dbReference type="InterPro" id="IPR003439">
    <property type="entry name" value="ABC_transporter-like_ATP-bd"/>
</dbReference>
<dbReference type="InterPro" id="IPR017871">
    <property type="entry name" value="ABC_transporter-like_CS"/>
</dbReference>
<dbReference type="InterPro" id="IPR015853">
    <property type="entry name" value="ABC_transpr_FbpC"/>
</dbReference>
<dbReference type="InterPro" id="IPR008995">
    <property type="entry name" value="Mo/tungstate-bd_C_term_dom"/>
</dbReference>
<dbReference type="InterPro" id="IPR027417">
    <property type="entry name" value="P-loop_NTPase"/>
</dbReference>
<dbReference type="PANTHER" id="PTHR42781">
    <property type="entry name" value="SPERMIDINE/PUTRESCINE IMPORT ATP-BINDING PROTEIN POTA"/>
    <property type="match status" value="1"/>
</dbReference>
<dbReference type="PANTHER" id="PTHR42781:SF4">
    <property type="entry name" value="SPERMIDINE_PUTRESCINE IMPORT ATP-BINDING PROTEIN POTA"/>
    <property type="match status" value="1"/>
</dbReference>
<dbReference type="Pfam" id="PF00005">
    <property type="entry name" value="ABC_tran"/>
    <property type="match status" value="1"/>
</dbReference>
<dbReference type="SMART" id="SM00382">
    <property type="entry name" value="AAA"/>
    <property type="match status" value="1"/>
</dbReference>
<dbReference type="SUPFAM" id="SSF50331">
    <property type="entry name" value="MOP-like"/>
    <property type="match status" value="1"/>
</dbReference>
<dbReference type="SUPFAM" id="SSF52540">
    <property type="entry name" value="P-loop containing nucleoside triphosphate hydrolases"/>
    <property type="match status" value="1"/>
</dbReference>
<dbReference type="PROSITE" id="PS00211">
    <property type="entry name" value="ABC_TRANSPORTER_1"/>
    <property type="match status" value="1"/>
</dbReference>
<dbReference type="PROSITE" id="PS50893">
    <property type="entry name" value="ABC_TRANSPORTER_2"/>
    <property type="match status" value="1"/>
</dbReference>
<dbReference type="PROSITE" id="PS51242">
    <property type="entry name" value="FBPC"/>
    <property type="match status" value="1"/>
</dbReference>